<evidence type="ECO:0000255" key="1">
    <source>
        <dbReference type="HAMAP-Rule" id="MF_01195"/>
    </source>
</evidence>
<evidence type="ECO:0000305" key="2"/>
<gene>
    <name evidence="1" type="primary">nanM</name>
    <name type="ordered locus">BMEII0856</name>
</gene>
<keyword id="KW-0119">Carbohydrate metabolism</keyword>
<keyword id="KW-0413">Isomerase</keyword>
<keyword id="KW-0880">Kelch repeat</keyword>
<keyword id="KW-0574">Periplasm</keyword>
<keyword id="KW-0677">Repeat</keyword>
<keyword id="KW-0732">Signal</keyword>
<organism>
    <name type="scientific">Brucella melitensis biotype 1 (strain ATCC 23456 / CCUG 17765 / NCTC 10094 / 16M)</name>
    <dbReference type="NCBI Taxonomy" id="224914"/>
    <lineage>
        <taxon>Bacteria</taxon>
        <taxon>Pseudomonadati</taxon>
        <taxon>Pseudomonadota</taxon>
        <taxon>Alphaproteobacteria</taxon>
        <taxon>Hyphomicrobiales</taxon>
        <taxon>Brucellaceae</taxon>
        <taxon>Brucella/Ochrobactrum group</taxon>
        <taxon>Brucella</taxon>
    </lineage>
</organism>
<sequence>MFSLIRAKRLAIGIAALAWSTGAVMASEHWPDLPVGIKNGAAARIGNMAYVGLGSAGTDFYALDLNNPSKGWVKRANFIGPATNGAAMAAAGGKIFAFSGNGKATPDAKSPIIFDTAYVYDPGSDGWSKLDTQTPVGLSGAKAVGLADGRIAIFGGYNKELFDKYLADVGAIDKDKEPEAYRKLVDSYMGMKPEAYRWNDEVLVYDPAGNNWGSLGANPFLPNCDPAMATMGEGDFLLVSGEIKPGLRTPEAKLVKIRDGAAHWQKVSDLPPLSGSEPQEGVAGAYAGKAGDDVLVAGGANFKGAQANAAAGKWFAHDGLAKSWRDDVYAFDGKDWKVAGKLPRGLAYGAAFDAPGGLLVVGGEDRDGKARKEVFLLKWDGKALSVEN</sequence>
<proteinExistence type="inferred from homology"/>
<comment type="function">
    <text evidence="1">Converts alpha-N-acetylneuranimic acid (Neu5Ac) to the beta-anomer, accelerating the equilibrium between the alpha- and beta-anomers. Probably facilitates sialidase-negative bacteria to compete successfully for limited amounts of extracellular Neu5Ac, which is likely taken up in the beta-anomer. In addition, the rapid removal of sialic acid from solution might be advantageous to the bacterium to damp down host responses.</text>
</comment>
<comment type="catalytic activity">
    <reaction evidence="1">
        <text>N-acetyl-alpha-neuraminate = N-acetyl-beta-neuraminate</text>
        <dbReference type="Rhea" id="RHEA:25233"/>
        <dbReference type="ChEBI" id="CHEBI:58705"/>
        <dbReference type="ChEBI" id="CHEBI:58770"/>
        <dbReference type="EC" id="5.1.3.24"/>
    </reaction>
</comment>
<comment type="subunit">
    <text evidence="1">Homodimer.</text>
</comment>
<comment type="subcellular location">
    <subcellularLocation>
        <location evidence="1">Periplasm</location>
    </subcellularLocation>
</comment>
<comment type="similarity">
    <text evidence="1">Belongs to the NanM family.</text>
</comment>
<comment type="sequence caution" evidence="2">
    <conflict type="erroneous initiation">
        <sequence resource="EMBL-CDS" id="AAL54098"/>
    </conflict>
</comment>
<dbReference type="EC" id="5.1.3.24" evidence="1"/>
<dbReference type="EMBL" id="AE008918">
    <property type="protein sequence ID" value="AAL54098.1"/>
    <property type="status" value="ALT_INIT"/>
    <property type="molecule type" value="Genomic_DNA"/>
</dbReference>
<dbReference type="EMBL" id="AF076290">
    <property type="protein sequence ID" value="AAD43845.1"/>
    <property type="molecule type" value="Genomic_DNA"/>
</dbReference>
<dbReference type="PIR" id="AG3616">
    <property type="entry name" value="AG3616"/>
</dbReference>
<dbReference type="RefSeq" id="WP_004681742.1">
    <property type="nucleotide sequence ID" value="NZ_GG703779.1"/>
</dbReference>
<dbReference type="SMR" id="Q8YBP3"/>
<dbReference type="GeneID" id="29595352"/>
<dbReference type="KEGG" id="bme:BMEII0856"/>
<dbReference type="KEGG" id="bmel:DK63_2392"/>
<dbReference type="PATRIC" id="fig|224914.52.peg.2507"/>
<dbReference type="eggNOG" id="COG3055">
    <property type="taxonomic scope" value="Bacteria"/>
</dbReference>
<dbReference type="PhylomeDB" id="Q8YBP3"/>
<dbReference type="Proteomes" id="UP000000419">
    <property type="component" value="Chromosome II"/>
</dbReference>
<dbReference type="GO" id="GO:0042597">
    <property type="term" value="C:periplasmic space"/>
    <property type="evidence" value="ECO:0007669"/>
    <property type="project" value="UniProtKB-SubCell"/>
</dbReference>
<dbReference type="GO" id="GO:0016857">
    <property type="term" value="F:racemase and epimerase activity, acting on carbohydrates and derivatives"/>
    <property type="evidence" value="ECO:0007669"/>
    <property type="project" value="UniProtKB-UniRule"/>
</dbReference>
<dbReference type="Gene3D" id="2.120.10.80">
    <property type="entry name" value="Kelch-type beta propeller"/>
    <property type="match status" value="2"/>
</dbReference>
<dbReference type="HAMAP" id="MF_01195">
    <property type="entry name" value="NanM"/>
    <property type="match status" value="1"/>
</dbReference>
<dbReference type="InterPro" id="IPR015915">
    <property type="entry name" value="Kelch-typ_b-propeller"/>
</dbReference>
<dbReference type="InterPro" id="IPR056734">
    <property type="entry name" value="NANM"/>
</dbReference>
<dbReference type="InterPro" id="IPR019936">
    <property type="entry name" value="NanM_proteobact"/>
</dbReference>
<dbReference type="NCBIfam" id="TIGR03547">
    <property type="entry name" value="muta_rot_YjhT"/>
    <property type="match status" value="1"/>
</dbReference>
<dbReference type="NCBIfam" id="NF010730">
    <property type="entry name" value="PRK14131.1"/>
    <property type="match status" value="1"/>
</dbReference>
<dbReference type="PANTHER" id="PTHR45632:SF3">
    <property type="entry name" value="KELCH-LIKE PROTEIN 32"/>
    <property type="match status" value="1"/>
</dbReference>
<dbReference type="PANTHER" id="PTHR45632">
    <property type="entry name" value="LD33804P"/>
    <property type="match status" value="1"/>
</dbReference>
<dbReference type="Pfam" id="PF24996">
    <property type="entry name" value="NANM"/>
    <property type="match status" value="1"/>
</dbReference>
<dbReference type="SUPFAM" id="SSF117281">
    <property type="entry name" value="Kelch motif"/>
    <property type="match status" value="1"/>
</dbReference>
<protein>
    <recommendedName>
        <fullName evidence="1">N-acetylneuraminate epimerase</fullName>
        <ecNumber evidence="1">5.1.3.24</ecNumber>
    </recommendedName>
    <alternativeName>
        <fullName evidence="1">N-acetylneuraminate mutarotase</fullName>
        <shortName evidence="1">Neu5Ac mutarotase</shortName>
    </alternativeName>
    <alternativeName>
        <fullName evidence="1">Sialic acid epimerase</fullName>
    </alternativeName>
</protein>
<accession>Q8YBP3</accession>
<accession>Q9XDD2</accession>
<reference key="1">
    <citation type="journal article" date="2002" name="Proc. Natl. Acad. Sci. U.S.A.">
        <title>The genome sequence of the facultative intracellular pathogen Brucella melitensis.</title>
        <authorList>
            <person name="DelVecchio V.G."/>
            <person name="Kapatral V."/>
            <person name="Redkar R.J."/>
            <person name="Patra G."/>
            <person name="Mujer C."/>
            <person name="Los T."/>
            <person name="Ivanova N."/>
            <person name="Anderson I."/>
            <person name="Bhattacharyya A."/>
            <person name="Lykidis A."/>
            <person name="Reznik G."/>
            <person name="Jablonski L."/>
            <person name="Larsen N."/>
            <person name="D'Souza M."/>
            <person name="Bernal A."/>
            <person name="Mazur M."/>
            <person name="Goltsman E."/>
            <person name="Selkov E."/>
            <person name="Elzer P.H."/>
            <person name="Hagius S."/>
            <person name="O'Callaghan D."/>
            <person name="Letesson J.-J."/>
            <person name="Haselkorn R."/>
            <person name="Kyrpides N.C."/>
            <person name="Overbeek R."/>
        </authorList>
    </citation>
    <scope>NUCLEOTIDE SEQUENCE [LARGE SCALE GENOMIC DNA]</scope>
    <source>
        <strain>ATCC 23456 / CCUG 17765 / NCTC 10094 / 16M</strain>
    </source>
</reference>
<reference key="2">
    <citation type="journal article" date="2001" name="Infect. Immun.">
        <title>Characterization of a Brucella species 25-kilobase DNA fragment deleted from Brucella abortus reveals a large gene cluster related to the synthesis of a polysaccharide.</title>
        <authorList>
            <person name="Vizcaino N."/>
            <person name="Cloeckaert A."/>
            <person name="Zygmunt M.S."/>
            <person name="Fernandez-Lago L."/>
        </authorList>
    </citation>
    <scope>NUCLEOTIDE SEQUENCE [GENOMIC DNA] OF 45-388</scope>
    <source>
        <strain>ATCC 23456 / CCUG 17765 / NCTC 10094 / 16M</strain>
    </source>
</reference>
<feature type="signal peptide" evidence="1">
    <location>
        <begin position="1"/>
        <end position="26"/>
    </location>
</feature>
<feature type="chain" id="PRO_0000333050" description="N-acetylneuraminate epimerase">
    <location>
        <begin position="27"/>
        <end position="388"/>
    </location>
</feature>
<feature type="repeat" description="Kelch 1">
    <location>
        <begin position="48"/>
        <end position="92"/>
    </location>
</feature>
<feature type="repeat" description="Kelch 2">
    <location>
        <begin position="94"/>
        <end position="147"/>
    </location>
</feature>
<feature type="repeat" description="Kelch 3">
    <location>
        <begin position="149"/>
        <end position="186"/>
    </location>
</feature>
<feature type="repeat" description="Kelch 4">
    <location>
        <begin position="187"/>
        <end position="232"/>
    </location>
</feature>
<feature type="repeat" description="Kelch 5">
    <location>
        <begin position="236"/>
        <end position="285"/>
    </location>
</feature>
<feature type="repeat" description="Kelch 6">
    <location>
        <begin position="307"/>
        <end position="356"/>
    </location>
</feature>
<feature type="repeat" description="Kelch 7">
    <location>
        <begin position="358"/>
        <end position="387"/>
    </location>
</feature>
<feature type="active site" description="Proton acceptor" evidence="1">
    <location>
        <position position="242"/>
    </location>
</feature>
<name>NANM_BRUME</name>